<feature type="chain" id="PRO_0000189818" description="Gamma-glutamyl phosphate reductase">
    <location>
        <begin position="1"/>
        <end position="419"/>
    </location>
</feature>
<gene>
    <name evidence="1" type="primary">proA</name>
    <name type="ordered locus">YPO3221</name>
    <name type="ordered locus">y0967</name>
    <name type="ordered locus">YP_0712</name>
</gene>
<sequence length="419" mass="45343">MNLLEHMGKAAKQASWQLAMLSTAKKNQALAVIANLLESESQTILQANERDMAAARESGMSEALLDRLLLTPARLAAIANDVRQVCRLNDPVGRVIDGSLLDSGLKLERRRVPLGVIGVIYEARPNVTIDVASLCLKTGNAVILRGGKETHYTNQATVNVIQRALEQCGLPAAAVQAIESPDRQLVNELLRLDRYVDMLIPRGGASLHKLCREQSTIPVITGGIGVCHTFVDENADFEKALLVIENAKIQRPSACNSLETLLVHQAVAKTFLPLLSARMHAFGVTLHASPLAMPYLADGKAKVVAVEAADYDDEWLSLDLNVDIVTDIDAAIDHIREHGTSHSDAILTRSLSHAEYFVRAVDSSAVYVNASTRFTDGGQFGLGAEVAVSTQKLHARGPMGLDALTTYKWIGYGDDLVRS</sequence>
<reference key="1">
    <citation type="journal article" date="2001" name="Nature">
        <title>Genome sequence of Yersinia pestis, the causative agent of plague.</title>
        <authorList>
            <person name="Parkhill J."/>
            <person name="Wren B.W."/>
            <person name="Thomson N.R."/>
            <person name="Titball R.W."/>
            <person name="Holden M.T.G."/>
            <person name="Prentice M.B."/>
            <person name="Sebaihia M."/>
            <person name="James K.D."/>
            <person name="Churcher C.M."/>
            <person name="Mungall K.L."/>
            <person name="Baker S."/>
            <person name="Basham D."/>
            <person name="Bentley S.D."/>
            <person name="Brooks K."/>
            <person name="Cerdeno-Tarraga A.-M."/>
            <person name="Chillingworth T."/>
            <person name="Cronin A."/>
            <person name="Davies R.M."/>
            <person name="Davis P."/>
            <person name="Dougan G."/>
            <person name="Feltwell T."/>
            <person name="Hamlin N."/>
            <person name="Holroyd S."/>
            <person name="Jagels K."/>
            <person name="Karlyshev A.V."/>
            <person name="Leather S."/>
            <person name="Moule S."/>
            <person name="Oyston P.C.F."/>
            <person name="Quail M.A."/>
            <person name="Rutherford K.M."/>
            <person name="Simmonds M."/>
            <person name="Skelton J."/>
            <person name="Stevens K."/>
            <person name="Whitehead S."/>
            <person name="Barrell B.G."/>
        </authorList>
    </citation>
    <scope>NUCLEOTIDE SEQUENCE [LARGE SCALE GENOMIC DNA]</scope>
    <source>
        <strain>CO-92 / Biovar Orientalis</strain>
    </source>
</reference>
<reference key="2">
    <citation type="journal article" date="2002" name="J. Bacteriol.">
        <title>Genome sequence of Yersinia pestis KIM.</title>
        <authorList>
            <person name="Deng W."/>
            <person name="Burland V."/>
            <person name="Plunkett G. III"/>
            <person name="Boutin A."/>
            <person name="Mayhew G.F."/>
            <person name="Liss P."/>
            <person name="Perna N.T."/>
            <person name="Rose D.J."/>
            <person name="Mau B."/>
            <person name="Zhou S."/>
            <person name="Schwartz D.C."/>
            <person name="Fetherston J.D."/>
            <person name="Lindler L.E."/>
            <person name="Brubaker R.R."/>
            <person name="Plano G.V."/>
            <person name="Straley S.C."/>
            <person name="McDonough K.A."/>
            <person name="Nilles M.L."/>
            <person name="Matson J.S."/>
            <person name="Blattner F.R."/>
            <person name="Perry R.D."/>
        </authorList>
    </citation>
    <scope>NUCLEOTIDE SEQUENCE [LARGE SCALE GENOMIC DNA]</scope>
    <source>
        <strain>KIM10+ / Biovar Mediaevalis</strain>
    </source>
</reference>
<reference key="3">
    <citation type="journal article" date="2004" name="DNA Res.">
        <title>Complete genome sequence of Yersinia pestis strain 91001, an isolate avirulent to humans.</title>
        <authorList>
            <person name="Song Y."/>
            <person name="Tong Z."/>
            <person name="Wang J."/>
            <person name="Wang L."/>
            <person name="Guo Z."/>
            <person name="Han Y."/>
            <person name="Zhang J."/>
            <person name="Pei D."/>
            <person name="Zhou D."/>
            <person name="Qin H."/>
            <person name="Pang X."/>
            <person name="Han Y."/>
            <person name="Zhai J."/>
            <person name="Li M."/>
            <person name="Cui B."/>
            <person name="Qi Z."/>
            <person name="Jin L."/>
            <person name="Dai R."/>
            <person name="Chen F."/>
            <person name="Li S."/>
            <person name="Ye C."/>
            <person name="Du Z."/>
            <person name="Lin W."/>
            <person name="Wang J."/>
            <person name="Yu J."/>
            <person name="Yang H."/>
            <person name="Wang J."/>
            <person name="Huang P."/>
            <person name="Yang R."/>
        </authorList>
    </citation>
    <scope>NUCLEOTIDE SEQUENCE [LARGE SCALE GENOMIC DNA]</scope>
    <source>
        <strain>91001 / Biovar Mediaevalis</strain>
    </source>
</reference>
<accession>Q8ZC09</accession>
<accession>Q0WC65</accession>
<proteinExistence type="inferred from homology"/>
<comment type="function">
    <text evidence="1">Catalyzes the NADPH-dependent reduction of L-glutamate 5-phosphate into L-glutamate 5-semialdehyde and phosphate. The product spontaneously undergoes cyclization to form 1-pyrroline-5-carboxylate.</text>
</comment>
<comment type="catalytic activity">
    <reaction evidence="1">
        <text>L-glutamate 5-semialdehyde + phosphate + NADP(+) = L-glutamyl 5-phosphate + NADPH + H(+)</text>
        <dbReference type="Rhea" id="RHEA:19541"/>
        <dbReference type="ChEBI" id="CHEBI:15378"/>
        <dbReference type="ChEBI" id="CHEBI:43474"/>
        <dbReference type="ChEBI" id="CHEBI:57783"/>
        <dbReference type="ChEBI" id="CHEBI:58066"/>
        <dbReference type="ChEBI" id="CHEBI:58274"/>
        <dbReference type="ChEBI" id="CHEBI:58349"/>
        <dbReference type="EC" id="1.2.1.41"/>
    </reaction>
</comment>
<comment type="pathway">
    <text evidence="1">Amino-acid biosynthesis; L-proline biosynthesis; L-glutamate 5-semialdehyde from L-glutamate: step 2/2.</text>
</comment>
<comment type="subcellular location">
    <subcellularLocation>
        <location evidence="1">Cytoplasm</location>
    </subcellularLocation>
</comment>
<comment type="similarity">
    <text evidence="1">Belongs to the gamma-glutamyl phosphate reductase family.</text>
</comment>
<evidence type="ECO:0000255" key="1">
    <source>
        <dbReference type="HAMAP-Rule" id="MF_00412"/>
    </source>
</evidence>
<name>PROA_YERPE</name>
<protein>
    <recommendedName>
        <fullName evidence="1">Gamma-glutamyl phosphate reductase</fullName>
        <shortName evidence="1">GPR</shortName>
        <ecNumber evidence="1">1.2.1.41</ecNumber>
    </recommendedName>
    <alternativeName>
        <fullName evidence="1">Glutamate-5-semialdehyde dehydrogenase</fullName>
    </alternativeName>
    <alternativeName>
        <fullName evidence="1">Glutamyl-gamma-semialdehyde dehydrogenase</fullName>
        <shortName evidence="1">GSA dehydrogenase</shortName>
    </alternativeName>
</protein>
<organism>
    <name type="scientific">Yersinia pestis</name>
    <dbReference type="NCBI Taxonomy" id="632"/>
    <lineage>
        <taxon>Bacteria</taxon>
        <taxon>Pseudomonadati</taxon>
        <taxon>Pseudomonadota</taxon>
        <taxon>Gammaproteobacteria</taxon>
        <taxon>Enterobacterales</taxon>
        <taxon>Yersiniaceae</taxon>
        <taxon>Yersinia</taxon>
    </lineage>
</organism>
<keyword id="KW-0028">Amino-acid biosynthesis</keyword>
<keyword id="KW-0963">Cytoplasm</keyword>
<keyword id="KW-0521">NADP</keyword>
<keyword id="KW-0560">Oxidoreductase</keyword>
<keyword id="KW-0641">Proline biosynthesis</keyword>
<keyword id="KW-1185">Reference proteome</keyword>
<dbReference type="EC" id="1.2.1.41" evidence="1"/>
<dbReference type="EMBL" id="AL590842">
    <property type="protein sequence ID" value="CAL21815.1"/>
    <property type="molecule type" value="Genomic_DNA"/>
</dbReference>
<dbReference type="EMBL" id="AE009952">
    <property type="protein sequence ID" value="AAM84548.1"/>
    <property type="molecule type" value="Genomic_DNA"/>
</dbReference>
<dbReference type="EMBL" id="AE017042">
    <property type="protein sequence ID" value="AAS60978.1"/>
    <property type="molecule type" value="Genomic_DNA"/>
</dbReference>
<dbReference type="PIR" id="AD0391">
    <property type="entry name" value="AD0391"/>
</dbReference>
<dbReference type="RefSeq" id="YP_002348123.1">
    <property type="nucleotide sequence ID" value="NC_003143.1"/>
</dbReference>
<dbReference type="SMR" id="Q8ZC09"/>
<dbReference type="STRING" id="214092.YPO3221"/>
<dbReference type="PaxDb" id="214092-YPO3221"/>
<dbReference type="EnsemblBacteria" id="AAS60978">
    <property type="protein sequence ID" value="AAS60978"/>
    <property type="gene ID" value="YP_0712"/>
</dbReference>
<dbReference type="KEGG" id="ype:YPO3221"/>
<dbReference type="KEGG" id="ypk:y0967"/>
<dbReference type="KEGG" id="ypm:YP_0712"/>
<dbReference type="PATRIC" id="fig|1028802.3.peg.79"/>
<dbReference type="eggNOG" id="COG0014">
    <property type="taxonomic scope" value="Bacteria"/>
</dbReference>
<dbReference type="HOGENOM" id="CLU_030231_0_0_6"/>
<dbReference type="OMA" id="KTQRYGT"/>
<dbReference type="OrthoDB" id="9809970at2"/>
<dbReference type="UniPathway" id="UPA00098">
    <property type="reaction ID" value="UER00360"/>
</dbReference>
<dbReference type="Proteomes" id="UP000000815">
    <property type="component" value="Chromosome"/>
</dbReference>
<dbReference type="Proteomes" id="UP000001019">
    <property type="component" value="Chromosome"/>
</dbReference>
<dbReference type="Proteomes" id="UP000002490">
    <property type="component" value="Chromosome"/>
</dbReference>
<dbReference type="GO" id="GO:0005737">
    <property type="term" value="C:cytoplasm"/>
    <property type="evidence" value="ECO:0007669"/>
    <property type="project" value="UniProtKB-SubCell"/>
</dbReference>
<dbReference type="GO" id="GO:0004350">
    <property type="term" value="F:glutamate-5-semialdehyde dehydrogenase activity"/>
    <property type="evidence" value="ECO:0000318"/>
    <property type="project" value="GO_Central"/>
</dbReference>
<dbReference type="GO" id="GO:0050661">
    <property type="term" value="F:NADP binding"/>
    <property type="evidence" value="ECO:0007669"/>
    <property type="project" value="InterPro"/>
</dbReference>
<dbReference type="GO" id="GO:0055129">
    <property type="term" value="P:L-proline biosynthetic process"/>
    <property type="evidence" value="ECO:0007669"/>
    <property type="project" value="UniProtKB-UniRule"/>
</dbReference>
<dbReference type="CDD" id="cd07079">
    <property type="entry name" value="ALDH_F18-19_ProA-GPR"/>
    <property type="match status" value="1"/>
</dbReference>
<dbReference type="FunFam" id="3.40.309.10:FF:000006">
    <property type="entry name" value="Gamma-glutamyl phosphate reductase"/>
    <property type="match status" value="1"/>
</dbReference>
<dbReference type="Gene3D" id="3.40.605.10">
    <property type="entry name" value="Aldehyde Dehydrogenase, Chain A, domain 1"/>
    <property type="match status" value="1"/>
</dbReference>
<dbReference type="Gene3D" id="3.40.309.10">
    <property type="entry name" value="Aldehyde Dehydrogenase, Chain A, domain 2"/>
    <property type="match status" value="1"/>
</dbReference>
<dbReference type="HAMAP" id="MF_00412">
    <property type="entry name" value="ProA"/>
    <property type="match status" value="1"/>
</dbReference>
<dbReference type="InterPro" id="IPR016161">
    <property type="entry name" value="Ald_DH/histidinol_DH"/>
</dbReference>
<dbReference type="InterPro" id="IPR016163">
    <property type="entry name" value="Ald_DH_C"/>
</dbReference>
<dbReference type="InterPro" id="IPR016162">
    <property type="entry name" value="Ald_DH_N"/>
</dbReference>
<dbReference type="InterPro" id="IPR015590">
    <property type="entry name" value="Aldehyde_DH_dom"/>
</dbReference>
<dbReference type="InterPro" id="IPR020593">
    <property type="entry name" value="G-glutamylP_reductase_CS"/>
</dbReference>
<dbReference type="InterPro" id="IPR012134">
    <property type="entry name" value="Glu-5-SA_DH"/>
</dbReference>
<dbReference type="InterPro" id="IPR000965">
    <property type="entry name" value="GPR_dom"/>
</dbReference>
<dbReference type="NCBIfam" id="NF001221">
    <property type="entry name" value="PRK00197.1"/>
    <property type="match status" value="1"/>
</dbReference>
<dbReference type="NCBIfam" id="TIGR00407">
    <property type="entry name" value="proA"/>
    <property type="match status" value="1"/>
</dbReference>
<dbReference type="PANTHER" id="PTHR11063:SF8">
    <property type="entry name" value="DELTA-1-PYRROLINE-5-CARBOXYLATE SYNTHASE"/>
    <property type="match status" value="1"/>
</dbReference>
<dbReference type="PANTHER" id="PTHR11063">
    <property type="entry name" value="GLUTAMATE SEMIALDEHYDE DEHYDROGENASE"/>
    <property type="match status" value="1"/>
</dbReference>
<dbReference type="Pfam" id="PF00171">
    <property type="entry name" value="Aldedh"/>
    <property type="match status" value="1"/>
</dbReference>
<dbReference type="PIRSF" id="PIRSF000151">
    <property type="entry name" value="GPR"/>
    <property type="match status" value="1"/>
</dbReference>
<dbReference type="SUPFAM" id="SSF53720">
    <property type="entry name" value="ALDH-like"/>
    <property type="match status" value="1"/>
</dbReference>
<dbReference type="PROSITE" id="PS01223">
    <property type="entry name" value="PROA"/>
    <property type="match status" value="1"/>
</dbReference>